<protein>
    <recommendedName>
        <fullName evidence="7">Beta-casein</fullName>
    </recommendedName>
</protein>
<organism>
    <name type="scientific">Equus asinus</name>
    <name type="common">Donkey</name>
    <name type="synonym">Equus africanus asinus</name>
    <dbReference type="NCBI Taxonomy" id="9793"/>
    <lineage>
        <taxon>Eukaryota</taxon>
        <taxon>Metazoa</taxon>
        <taxon>Chordata</taxon>
        <taxon>Craniata</taxon>
        <taxon>Vertebrata</taxon>
        <taxon>Euteleostomi</taxon>
        <taxon>Mammalia</taxon>
        <taxon>Eutheria</taxon>
        <taxon>Laurasiatheria</taxon>
        <taxon>Perissodactyla</taxon>
        <taxon>Equidae</taxon>
        <taxon>Equus</taxon>
    </lineage>
</organism>
<reference key="1">
    <citation type="journal article" date="2009" name="Rapid Commun. Mass Spectrom.">
        <title>Sequence and phosphorylation level determination of two donkey beta-caseins by mass spectrometry.</title>
        <authorList>
            <person name="Cunsolo V."/>
            <person name="Cairone E."/>
            <person name="Saletti R."/>
            <person name="Muccilli V."/>
            <person name="Foti S."/>
        </authorList>
    </citation>
    <scope>PROTEIN SEQUENCE</scope>
    <scope>MASS SPECTROMETRY</scope>
    <scope>PHOSPHORYLATION</scope>
    <scope>VARIANT A-DELTA5 27-GLU--LYS-34 DEL</scope>
    <source>
        <tissue>Milk</tissue>
    </source>
</reference>
<keyword id="KW-0903">Direct protein sequencing</keyword>
<keyword id="KW-0494">Milk protein</keyword>
<keyword id="KW-0597">Phosphoprotein</keyword>
<keyword id="KW-1185">Reference proteome</keyword>
<keyword id="KW-0964">Secreted</keyword>
<accession>P86273</accession>
<evidence type="ECO:0000250" key="1">
    <source>
        <dbReference type="UniProtKB" id="P02666"/>
    </source>
</evidence>
<evidence type="ECO:0000250" key="2">
    <source>
        <dbReference type="UniProtKB" id="P05814"/>
    </source>
</evidence>
<evidence type="ECO:0000250" key="3">
    <source>
        <dbReference type="UniProtKB" id="Q9GKK3"/>
    </source>
</evidence>
<evidence type="ECO:0000255" key="4"/>
<evidence type="ECO:0000256" key="5">
    <source>
        <dbReference type="SAM" id="MobiDB-lite"/>
    </source>
</evidence>
<evidence type="ECO:0000269" key="6">
    <source>
    </source>
</evidence>
<evidence type="ECO:0000303" key="7">
    <source>
    </source>
</evidence>
<evidence type="ECO:0000305" key="8"/>
<dbReference type="SMR" id="P86273"/>
<dbReference type="Proteomes" id="UP000694387">
    <property type="component" value="Unplaced"/>
</dbReference>
<dbReference type="GO" id="GO:0005615">
    <property type="term" value="C:extracellular space"/>
    <property type="evidence" value="ECO:0007669"/>
    <property type="project" value="TreeGrafter"/>
</dbReference>
<dbReference type="InterPro" id="IPR001588">
    <property type="entry name" value="Casein"/>
</dbReference>
<dbReference type="InterPro" id="IPR016345">
    <property type="entry name" value="Casein_beta"/>
</dbReference>
<dbReference type="PANTHER" id="PTHR11500">
    <property type="entry name" value="BETA CASEIN"/>
    <property type="match status" value="1"/>
</dbReference>
<dbReference type="PANTHER" id="PTHR11500:SF0">
    <property type="entry name" value="BETA-CASEIN"/>
    <property type="match status" value="1"/>
</dbReference>
<dbReference type="Pfam" id="PF00363">
    <property type="entry name" value="Casein"/>
    <property type="match status" value="1"/>
</dbReference>
<dbReference type="PIRSF" id="PIRSF002372">
    <property type="entry name" value="Beta-casein"/>
    <property type="match status" value="1"/>
</dbReference>
<gene>
    <name evidence="1" type="primary">CSN2</name>
</gene>
<feature type="chain" id="PRO_0000376023" description="Beta-casein">
    <location>
        <begin position="1"/>
        <end position="226"/>
    </location>
</feature>
<feature type="region of interest" description="Disordered" evidence="5">
    <location>
        <begin position="1"/>
        <end position="51"/>
    </location>
</feature>
<feature type="compositionally biased region" description="Basic and acidic residues" evidence="5">
    <location>
        <begin position="28"/>
        <end position="51"/>
    </location>
</feature>
<feature type="modified residue" description="Phosphoserine" evidence="3">
    <location>
        <position position="9"/>
    </location>
</feature>
<feature type="modified residue" description="Phosphothreonine" evidence="3">
    <location>
        <position position="12"/>
    </location>
</feature>
<feature type="modified residue" description="Phosphoserine" evidence="2">
    <location>
        <position position="15"/>
    </location>
</feature>
<feature type="modified residue" description="Phosphoserine" evidence="2">
    <location>
        <position position="17"/>
    </location>
</feature>
<feature type="modified residue" description="Phosphoserine" evidence="2">
    <location>
        <position position="18"/>
    </location>
</feature>
<feature type="modified residue" description="Phosphoserine" evidence="2">
    <location>
        <position position="25"/>
    </location>
</feature>
<feature type="sequence variant" description="In A-Delta5." evidence="6">
    <location>
        <begin position="27"/>
        <end position="34"/>
    </location>
</feature>
<proteinExistence type="evidence at protein level"/>
<sequence length="226" mass="25529">REKEELNVSSETVESLSSNEPDSSSEESITHINKEKSQKFKHEGQQQREVEHQDKISRFVQPQPVVYPYAEPVPYAVVPQNILVLAQPPIVPFLQPEIMEVSQAKETILPKRKVMPFLKSPIVPFSERQILNPTNGENLRLPVHLIQPFMHQVPQSLLQTLMLPSQPVLSPPQSKVAPFPQPVVPYPQRDTPVQAFLLYQDPQLGLTGEFDPATQPIVPVHNPVIV</sequence>
<comment type="function">
    <text evidence="1">Important role in determination of the surface properties of the casein micelles.</text>
</comment>
<comment type="subcellular location">
    <subcellularLocation>
        <location evidence="8">Secreted</location>
    </subcellularLocation>
</comment>
<comment type="tissue specificity">
    <text evidence="8">Mammary gland specific. Secreted in milk.</text>
</comment>
<comment type="PTM">
    <text evidence="6">There are at least three different forms found in milk, with varying degrees of phosphorylation. These include form 5-P which is phosphorylated at three sites, this form is present in low amounts, form 6-P which is phosphorylated at six sites, and form 7-P which is phosphorylated at seven sites.</text>
</comment>
<comment type="mass spectrometry" mass="25529.0" error="2.0" method="MALDI" evidence="6"/>
<comment type="mass spectrometry" mass="24606.0" error="2.0" method="MALDI" evidence="6">
    <text>Variant A-Delta5.</text>
</comment>
<comment type="similarity">
    <text evidence="4">Belongs to the beta-casein family.</text>
</comment>
<name>CASB_EQUAS</name>